<accession>Q9SGH2</accession>
<accession>Q9SSA6</accession>
<protein>
    <recommendedName>
        <fullName>Methyl-CpG-binding domain-containing protein 9</fullName>
        <shortName>AtMBD9</shortName>
        <shortName>MBD09</shortName>
        <ecNumber>2.3.1.48</ecNumber>
    </recommendedName>
    <alternativeName>
        <fullName>Histone acetyl transferase MBD9</fullName>
    </alternativeName>
    <alternativeName>
        <fullName>Methyl-CpG-binding protein MBD9</fullName>
    </alternativeName>
</protein>
<comment type="function">
    <text evidence="10 11">Probable transcriptional regulator that acts as a histone acetyltransferase. Mediates the acetylation of histone H3 and H4 of target loci (e.g. FLC). Involved in an auxin-independent regulation of shoot branching and flowering time.</text>
</comment>
<comment type="catalytic activity">
    <reaction>
        <text>L-lysyl-[protein] + acetyl-CoA = N(6)-acetyl-L-lysyl-[protein] + CoA + H(+)</text>
        <dbReference type="Rhea" id="RHEA:45948"/>
        <dbReference type="Rhea" id="RHEA-COMP:9752"/>
        <dbReference type="Rhea" id="RHEA-COMP:10731"/>
        <dbReference type="ChEBI" id="CHEBI:15378"/>
        <dbReference type="ChEBI" id="CHEBI:29969"/>
        <dbReference type="ChEBI" id="CHEBI:57287"/>
        <dbReference type="ChEBI" id="CHEBI:57288"/>
        <dbReference type="ChEBI" id="CHEBI:61930"/>
        <dbReference type="EC" id="2.3.1.48"/>
    </reaction>
</comment>
<comment type="subunit">
    <text>Interacts with histone H4.</text>
</comment>
<comment type="subcellular location">
    <subcellularLocation>
        <location evidence="11">Nucleus</location>
    </subcellularLocation>
</comment>
<comment type="alternative products">
    <event type="alternative splicing"/>
    <isoform>
        <id>Q9SGH2-1</id>
        <name>1</name>
        <sequence type="displayed"/>
    </isoform>
    <isoform>
        <id>Q9SGH2-2</id>
        <name>2</name>
        <sequence type="not described"/>
    </isoform>
</comment>
<comment type="tissue specificity">
    <text evidence="9 11">Expressed in leaves, buds, flowers and stems.</text>
</comment>
<comment type="domain">
    <text evidence="1">The methyl-CpG-binding domain (MBD) functions both in binding to methylated DNA and in protein interactions.</text>
</comment>
<comment type="disruption phenotype">
    <text evidence="10 11">Over-methylated genomic DNA. Increased shoot branching and reduced transcription of FLC leading to early flowering, associated with a decrease in the acetylation level in histone H3 and H4 of FLC chromatin.</text>
</comment>
<comment type="sequence caution" evidence="12">
    <conflict type="erroneous gene model prediction">
        <sequence resource="EMBL-CDS" id="AAF01531"/>
    </conflict>
</comment>
<organism>
    <name type="scientific">Arabidopsis thaliana</name>
    <name type="common">Mouse-ear cress</name>
    <dbReference type="NCBI Taxonomy" id="3702"/>
    <lineage>
        <taxon>Eukaryota</taxon>
        <taxon>Viridiplantae</taxon>
        <taxon>Streptophyta</taxon>
        <taxon>Embryophyta</taxon>
        <taxon>Tracheophyta</taxon>
        <taxon>Spermatophyta</taxon>
        <taxon>Magnoliopsida</taxon>
        <taxon>eudicotyledons</taxon>
        <taxon>Gunneridae</taxon>
        <taxon>Pentapetalae</taxon>
        <taxon>rosids</taxon>
        <taxon>malvids</taxon>
        <taxon>Brassicales</taxon>
        <taxon>Brassicaceae</taxon>
        <taxon>Camelineae</taxon>
        <taxon>Arabidopsis</taxon>
    </lineage>
</organism>
<dbReference type="EC" id="2.3.1.48"/>
<dbReference type="EMBL" id="AC009325">
    <property type="protein sequence ID" value="AAF01531.1"/>
    <property type="status" value="ALT_SEQ"/>
    <property type="molecule type" value="Genomic_DNA"/>
</dbReference>
<dbReference type="EMBL" id="AC010870">
    <property type="protein sequence ID" value="AAF24616.1"/>
    <property type="molecule type" value="Genomic_DNA"/>
</dbReference>
<dbReference type="EMBL" id="CP002686">
    <property type="protein sequence ID" value="AEE73669.1"/>
    <property type="molecule type" value="Genomic_DNA"/>
</dbReference>
<dbReference type="RefSeq" id="NP_186795.1">
    <molecule id="Q9SGH2-1"/>
    <property type="nucleotide sequence ID" value="NM_111012.4"/>
</dbReference>
<dbReference type="SMR" id="Q9SGH2"/>
<dbReference type="BioGRID" id="6465">
    <property type="interactions" value="3"/>
</dbReference>
<dbReference type="FunCoup" id="Q9SGH2">
    <property type="interactions" value="2077"/>
</dbReference>
<dbReference type="STRING" id="3702.Q9SGH2"/>
<dbReference type="iPTMnet" id="Q9SGH2"/>
<dbReference type="PaxDb" id="3702-AT3G01460.1"/>
<dbReference type="ProteomicsDB" id="238318">
    <molecule id="Q9SGH2-1"/>
</dbReference>
<dbReference type="EnsemblPlants" id="AT3G01460.1">
    <molecule id="Q9SGH2-1"/>
    <property type="protein sequence ID" value="AT3G01460.1"/>
    <property type="gene ID" value="AT3G01460"/>
</dbReference>
<dbReference type="GeneID" id="821132"/>
<dbReference type="Gramene" id="AT3G01460.1">
    <molecule id="Q9SGH2-1"/>
    <property type="protein sequence ID" value="AT3G01460.1"/>
    <property type="gene ID" value="AT3G01460"/>
</dbReference>
<dbReference type="KEGG" id="ath:AT3G01460"/>
<dbReference type="Araport" id="AT3G01460"/>
<dbReference type="TAIR" id="AT3G01460">
    <property type="gene designation" value="MBD9"/>
</dbReference>
<dbReference type="eggNOG" id="ENOG502QW8S">
    <property type="taxonomic scope" value="Eukaryota"/>
</dbReference>
<dbReference type="HOGENOM" id="CLU_234476_0_0_1"/>
<dbReference type="InParanoid" id="Q9SGH2"/>
<dbReference type="OMA" id="WTYYETE"/>
<dbReference type="OrthoDB" id="1903104at2759"/>
<dbReference type="PhylomeDB" id="Q9SGH2"/>
<dbReference type="PRO" id="PR:Q9SGH2"/>
<dbReference type="Proteomes" id="UP000006548">
    <property type="component" value="Chromosome 3"/>
</dbReference>
<dbReference type="ExpressionAtlas" id="Q9SGH2">
    <property type="expression patterns" value="baseline and differential"/>
</dbReference>
<dbReference type="GO" id="GO:0005634">
    <property type="term" value="C:nucleus"/>
    <property type="evidence" value="ECO:0000314"/>
    <property type="project" value="UniProtKB"/>
</dbReference>
<dbReference type="GO" id="GO:0009506">
    <property type="term" value="C:plasmodesma"/>
    <property type="evidence" value="ECO:0007005"/>
    <property type="project" value="TAIR"/>
</dbReference>
<dbReference type="GO" id="GO:0000812">
    <property type="term" value="C:Swr1 complex"/>
    <property type="evidence" value="ECO:0000314"/>
    <property type="project" value="TAIR"/>
</dbReference>
<dbReference type="GO" id="GO:0004402">
    <property type="term" value="F:histone acetyltransferase activity"/>
    <property type="evidence" value="ECO:0000314"/>
    <property type="project" value="UniProtKB"/>
</dbReference>
<dbReference type="GO" id="GO:0042393">
    <property type="term" value="F:histone binding"/>
    <property type="evidence" value="ECO:0000353"/>
    <property type="project" value="UniProtKB"/>
</dbReference>
<dbReference type="GO" id="GO:0008327">
    <property type="term" value="F:methyl-CpG binding"/>
    <property type="evidence" value="ECO:0000250"/>
    <property type="project" value="TAIR"/>
</dbReference>
<dbReference type="GO" id="GO:0008270">
    <property type="term" value="F:zinc ion binding"/>
    <property type="evidence" value="ECO:0007669"/>
    <property type="project" value="UniProtKB-KW"/>
</dbReference>
<dbReference type="GO" id="GO:0040029">
    <property type="term" value="P:epigenetic regulation of gene expression"/>
    <property type="evidence" value="ECO:0000314"/>
    <property type="project" value="UniProtKB"/>
</dbReference>
<dbReference type="GO" id="GO:0048573">
    <property type="term" value="P:photoperiodism, flowering"/>
    <property type="evidence" value="ECO:0000315"/>
    <property type="project" value="TAIR"/>
</dbReference>
<dbReference type="GO" id="GO:0006355">
    <property type="term" value="P:regulation of DNA-templated transcription"/>
    <property type="evidence" value="ECO:0000315"/>
    <property type="project" value="TAIR"/>
</dbReference>
<dbReference type="GO" id="GO:0010223">
    <property type="term" value="P:secondary shoot formation"/>
    <property type="evidence" value="ECO:0000315"/>
    <property type="project" value="TAIR"/>
</dbReference>
<dbReference type="CDD" id="cd15519">
    <property type="entry name" value="PHD1_Lid2p_like"/>
    <property type="match status" value="1"/>
</dbReference>
<dbReference type="FunFam" id="3.30.160.360:FF:000013">
    <property type="entry name" value="Methyl-CpG-binding domain 9"/>
    <property type="match status" value="1"/>
</dbReference>
<dbReference type="Gene3D" id="3.30.160.360">
    <property type="match status" value="1"/>
</dbReference>
<dbReference type="Gene3D" id="1.20.920.10">
    <property type="entry name" value="Bromodomain-like"/>
    <property type="match status" value="1"/>
</dbReference>
<dbReference type="Gene3D" id="3.30.40.10">
    <property type="entry name" value="Zinc/RING finger domain, C3HC4 (zinc finger)"/>
    <property type="match status" value="2"/>
</dbReference>
<dbReference type="InterPro" id="IPR036427">
    <property type="entry name" value="Bromodomain-like_sf"/>
</dbReference>
<dbReference type="InterPro" id="IPR016177">
    <property type="entry name" value="DNA-bd_dom_sf"/>
</dbReference>
<dbReference type="InterPro" id="IPR003889">
    <property type="entry name" value="FYrich_C"/>
</dbReference>
<dbReference type="InterPro" id="IPR003888">
    <property type="entry name" value="FYrich_N"/>
</dbReference>
<dbReference type="InterPro" id="IPR001739">
    <property type="entry name" value="Methyl_CpG_DNA-bd"/>
</dbReference>
<dbReference type="InterPro" id="IPR028942">
    <property type="entry name" value="WHIM1_dom"/>
</dbReference>
<dbReference type="InterPro" id="IPR028941">
    <property type="entry name" value="WHIM2_dom"/>
</dbReference>
<dbReference type="InterPro" id="IPR019786">
    <property type="entry name" value="Zinc_finger_PHD-type_CS"/>
</dbReference>
<dbReference type="InterPro" id="IPR011011">
    <property type="entry name" value="Znf_FYVE_PHD"/>
</dbReference>
<dbReference type="InterPro" id="IPR001965">
    <property type="entry name" value="Znf_PHD"/>
</dbReference>
<dbReference type="InterPro" id="IPR019787">
    <property type="entry name" value="Znf_PHD-finger"/>
</dbReference>
<dbReference type="InterPro" id="IPR013083">
    <property type="entry name" value="Znf_RING/FYVE/PHD"/>
</dbReference>
<dbReference type="PANTHER" id="PTHR47162:SF8">
    <property type="entry name" value="METHYL-CPG-BINDING DOMAIN-CONTAINING PROTEIN 9"/>
    <property type="match status" value="1"/>
</dbReference>
<dbReference type="PANTHER" id="PTHR47162">
    <property type="entry name" value="OS02G0192300 PROTEIN"/>
    <property type="match status" value="1"/>
</dbReference>
<dbReference type="Pfam" id="PF05965">
    <property type="entry name" value="FYRC"/>
    <property type="match status" value="1"/>
</dbReference>
<dbReference type="Pfam" id="PF05964">
    <property type="entry name" value="FYRN"/>
    <property type="match status" value="1"/>
</dbReference>
<dbReference type="Pfam" id="PF01429">
    <property type="entry name" value="MBD"/>
    <property type="match status" value="1"/>
</dbReference>
<dbReference type="Pfam" id="PF00628">
    <property type="entry name" value="PHD"/>
    <property type="match status" value="2"/>
</dbReference>
<dbReference type="Pfam" id="PF15612">
    <property type="entry name" value="WHIM1"/>
    <property type="match status" value="1"/>
</dbReference>
<dbReference type="Pfam" id="PF15613">
    <property type="entry name" value="WSD"/>
    <property type="match status" value="1"/>
</dbReference>
<dbReference type="SMART" id="SM00249">
    <property type="entry name" value="PHD"/>
    <property type="match status" value="2"/>
</dbReference>
<dbReference type="SUPFAM" id="SSF54171">
    <property type="entry name" value="DNA-binding domain"/>
    <property type="match status" value="1"/>
</dbReference>
<dbReference type="SUPFAM" id="SSF57903">
    <property type="entry name" value="FYVE/PHD zinc finger"/>
    <property type="match status" value="2"/>
</dbReference>
<dbReference type="PROSITE" id="PS50014">
    <property type="entry name" value="BROMODOMAIN_2"/>
    <property type="match status" value="1"/>
</dbReference>
<dbReference type="PROSITE" id="PS51543">
    <property type="entry name" value="FYRC"/>
    <property type="match status" value="1"/>
</dbReference>
<dbReference type="PROSITE" id="PS51542">
    <property type="entry name" value="FYRN"/>
    <property type="match status" value="1"/>
</dbReference>
<dbReference type="PROSITE" id="PS50982">
    <property type="entry name" value="MBD"/>
    <property type="match status" value="1"/>
</dbReference>
<dbReference type="PROSITE" id="PS01359">
    <property type="entry name" value="ZF_PHD_1"/>
    <property type="match status" value="2"/>
</dbReference>
<dbReference type="PROSITE" id="PS50016">
    <property type="entry name" value="ZF_PHD_2"/>
    <property type="match status" value="2"/>
</dbReference>
<evidence type="ECO:0000250" key="1"/>
<evidence type="ECO:0000255" key="2"/>
<evidence type="ECO:0000255" key="3">
    <source>
        <dbReference type="PROSITE-ProRule" id="PRU00035"/>
    </source>
</evidence>
<evidence type="ECO:0000255" key="4">
    <source>
        <dbReference type="PROSITE-ProRule" id="PRU00146"/>
    </source>
</evidence>
<evidence type="ECO:0000255" key="5">
    <source>
        <dbReference type="PROSITE-ProRule" id="PRU00338"/>
    </source>
</evidence>
<evidence type="ECO:0000255" key="6">
    <source>
        <dbReference type="PROSITE-ProRule" id="PRU00875"/>
    </source>
</evidence>
<evidence type="ECO:0000255" key="7">
    <source>
        <dbReference type="PROSITE-ProRule" id="PRU00876"/>
    </source>
</evidence>
<evidence type="ECO:0000256" key="8">
    <source>
        <dbReference type="SAM" id="MobiDB-lite"/>
    </source>
</evidence>
<evidence type="ECO:0000269" key="9">
    <source>
    </source>
</evidence>
<evidence type="ECO:0000269" key="10">
    <source>
    </source>
</evidence>
<evidence type="ECO:0000269" key="11">
    <source>
    </source>
</evidence>
<evidence type="ECO:0000305" key="12"/>
<keyword id="KW-0025">Alternative splicing</keyword>
<keyword id="KW-0103">Bromodomain</keyword>
<keyword id="KW-0175">Coiled coil</keyword>
<keyword id="KW-0238">DNA-binding</keyword>
<keyword id="KW-0479">Metal-binding</keyword>
<keyword id="KW-0539">Nucleus</keyword>
<keyword id="KW-1185">Reference proteome</keyword>
<keyword id="KW-0677">Repeat</keyword>
<keyword id="KW-0804">Transcription</keyword>
<keyword id="KW-0805">Transcription regulation</keyword>
<keyword id="KW-0808">Transferase</keyword>
<keyword id="KW-0862">Zinc</keyword>
<keyword id="KW-0863">Zinc-finger</keyword>
<feature type="chain" id="PRO_0000405285" description="Methyl-CpG-binding domain-containing protein 9">
    <location>
        <begin position="1"/>
        <end position="2176"/>
    </location>
</feature>
<feature type="domain" description="MBD" evidence="5">
    <location>
        <begin position="258"/>
        <end position="327"/>
    </location>
</feature>
<feature type="domain" description="FYR N-terminal" evidence="6">
    <location>
        <begin position="403"/>
        <end position="456"/>
    </location>
</feature>
<feature type="domain" description="FYR C-terminal" evidence="7">
    <location>
        <begin position="550"/>
        <end position="698"/>
    </location>
</feature>
<feature type="repeat" description="Pumilio">
    <location>
        <begin position="1098"/>
        <end position="1137"/>
    </location>
</feature>
<feature type="domain" description="Bromo" evidence="3">
    <location>
        <begin position="1130"/>
        <end position="1245"/>
    </location>
</feature>
<feature type="zinc finger region" description="PHD-type 1" evidence="4">
    <location>
        <begin position="83"/>
        <end position="133"/>
    </location>
</feature>
<feature type="zinc finger region" description="RING-type 1; degenerate">
    <location>
        <begin position="86"/>
        <end position="131"/>
    </location>
</feature>
<feature type="zinc finger region" description="PHD-type 2" evidence="4">
    <location>
        <begin position="1287"/>
        <end position="1337"/>
    </location>
</feature>
<feature type="zinc finger region" description="RING-type 2; degenerate">
    <location>
        <begin position="1290"/>
        <end position="1335"/>
    </location>
</feature>
<feature type="region of interest" description="Disordered" evidence="8">
    <location>
        <begin position="1"/>
        <end position="20"/>
    </location>
</feature>
<feature type="region of interest" description="Disordered" evidence="8">
    <location>
        <begin position="28"/>
        <end position="85"/>
    </location>
</feature>
<feature type="region of interest" description="Disordered" evidence="8">
    <location>
        <begin position="1472"/>
        <end position="1553"/>
    </location>
</feature>
<feature type="region of interest" description="Disordered" evidence="8">
    <location>
        <begin position="1565"/>
        <end position="1595"/>
    </location>
</feature>
<feature type="region of interest" description="Disordered" evidence="8">
    <location>
        <begin position="2136"/>
        <end position="2176"/>
    </location>
</feature>
<feature type="coiled-coil region" evidence="2">
    <location>
        <begin position="491"/>
        <end position="511"/>
    </location>
</feature>
<feature type="coiled-coil region" evidence="2">
    <location>
        <begin position="1251"/>
        <end position="1273"/>
    </location>
</feature>
<feature type="coiled-coil region" evidence="2">
    <location>
        <begin position="1410"/>
        <end position="1437"/>
    </location>
</feature>
<feature type="coiled-coil region" evidence="2">
    <location>
        <begin position="1588"/>
        <end position="1628"/>
    </location>
</feature>
<feature type="short sequence motif" description="Nuclear localization signal" evidence="1">
    <location>
        <begin position="914"/>
        <end position="921"/>
    </location>
</feature>
<feature type="short sequence motif" description="Nuclear localization signal" evidence="1">
    <location>
        <begin position="1124"/>
        <end position="1131"/>
    </location>
</feature>
<feature type="short sequence motif" description="Nuclear localization signal" evidence="1">
    <location>
        <begin position="1256"/>
        <end position="1263"/>
    </location>
</feature>
<feature type="short sequence motif" description="Nuclear localization signal" evidence="1">
    <location>
        <begin position="1337"/>
        <end position="1344"/>
    </location>
</feature>
<feature type="short sequence motif" description="Nuclear localization signal" evidence="1">
    <location>
        <begin position="1761"/>
        <end position="1768"/>
    </location>
</feature>
<feature type="compositionally biased region" description="Polar residues" evidence="8">
    <location>
        <begin position="1"/>
        <end position="13"/>
    </location>
</feature>
<feature type="compositionally biased region" description="Polar residues" evidence="8">
    <location>
        <begin position="1492"/>
        <end position="1513"/>
    </location>
</feature>
<feature type="compositionally biased region" description="Polar residues" evidence="8">
    <location>
        <begin position="1523"/>
        <end position="1532"/>
    </location>
</feature>
<feature type="compositionally biased region" description="Polar residues" evidence="8">
    <location>
        <begin position="1585"/>
        <end position="1595"/>
    </location>
</feature>
<name>MBD9_ARATH</name>
<sequence length="2176" mass="240431">MEPTDSTNEQLGDTKTAAVKEESRSFLGIDLNEIPTGATLGGGCTAGQDDDGEYEPVEVVRSIHDNPDPAPGAPAEVPEPDRDASCGACGRPESIELVVVCDACERGFHMSCVNDGVEAAPSADWMCSDCRTGGERSKLWPLGVKSKLILDMNASPPSDAEGYGAEETSDSRKHMLASSSCIGNSFDYAMMHSSFSSLGRGHASLEASGLMSRNTKMSMDALGSHNLGFGFPLNLNNSSLPMRFPSLDPSELFLQNLRHFISERHGVLEDGWRVEFRQPLNGYQLCAVYCAPNGKTFSSIQEVACYLGLAINGNYSCMDAEIRNENSLLQERLHTPKRRKTSRWPNNGFPEQKGSSVSAQLRRFPFNGQTMSPFAVKSGTHFQAGGSLSSGNNGCGCEEAKNGCPMQFEDFFVLSLGRIDIRQSYHNVNVIYPIGYKSCWHDKITGSLFTCEVSDGNSGPIFKVTRSPCSKSFIPAGSTVFSCPKIDEMVEQNSDKLSNRRDSTQERDDDASVEILLSEHCPPLGDDILSCLREKSFSKTVNSLRSEVDSSRVDFDKNLSYDQDHGVEIGDIVVEEDSLSDAWKKVSQKLVDACSIVLKQKGTLNFLCKHVDRETSEINWDTMNEKDNVILSLSKFCCSLAPCSVTCGEKDKSEFAAVVDALSRWLDQNRFGLDADFVQEMIEHMPGAESCTNYRTLKSRSSSSVPITVAEGALVVKPKGGENVKDEVFGEISRKAKKPKLNGGHGVRNLHPPPGRPMCLRLPPGLVGDFLQVSEVFWRFHEILGFEEAFSPENLEQELINPVFDGLFLDKPGKDDKRSEINFTDKDSTATKLFSLFDESRQPFPAKNTSASELKEKKAGDSSDFKISDSSRGSCVGALLTRAHISLLQVLICELQSKVAAFVDPNFDSGESRSRRGRKKDDSTLSAKRNKLHMLPVNEFTWPELARRYILSLLSMDGNLESAEIAARESGKVFRCLQGDGGLLCGSLTGVAGMEADSMLLAEAIKKISGSLTSENDVLSVEDDDSDGLDATETNTCSGDIPEWAQVLEPVKKLPTNVGTRIRKCVYEALERNPPEWAKKILEHSISKEIYKGNASGPTKKAVLSLLADIRGGDLVQRSIKGTKKRTYISVSDVIMKKCRAVLRGVAAADEDKVLCTLLGRKLLNSSDNDDDGLLGSPAMVSRPLDFRTIDLRLAAGAYDGSTEAFLEDVLELWSSIRVMYADQPDCVDLVATLSEKFKSLYEAEVVPLVQKLKDYRKLECLSAEMKKEIKDIVVSVNKLPKAPWDEGVCKVCGVDKDDDSVLLCDTCDAEYHTYCLNPPLIRIPDGNWYCPSCVIAKRMAQEALESYKLVRRRKGRKYQGELTRASMELTAHLADVMEEKDYWEFSAEERILLLKLLCDELLSSSLVHQHLEQCAEAIIEMQQKLRSLSSEWKNAKMRQEFLTAKLAKVEPSILKEVGEPHNSSYFADQMGCDPQPQEGVGDGVTRDDETSSTAYLNKNQGKSPLETDTQPGESHVNFGESKISSPETISSPGRHELPIADTSPLVTDNLPEKDTSETLLKSVGRNHETHSPNSNAVELPTAHDASSQASQELQACQQDLSATSNEIQNLQQSIRSIESQLLKQSIRRDFLGTDASGRLYWGCCFPDENPRILVDGSISLQKPVQADLIGSKVPSPFLHTVDHGRLRLSPWTYYETETEISELVQWLHDDDLKERDLRESILWWKRLRYGDVQKEKKQAQNLSAPVFATGLETKAAMSMEKRYGPCIKLEMETLKKRGKKTKVAEREKLCRCECLESILPSMIHCLICHKTFASDDEFEDHTESKCIPYSLATEEGKDISDSSKAKESLKSDYLNVKSSAGKDVAEISNVSELDSGLIRYQEEESISPYHFEEICSKFVTKDCNRDLVKEIGLISSNGIPTFLPSSSTHLNDSVLISAKSNKPDGGDSGDQVIFAGPETNVEGLNSESNMSFDRSVTDSHGGPLDKPSGLGFGFSEQKNKKSSGSGLKSCCVVPQAALKRVTGKALPGFRFLKTNLLDMDVALPEEALRPSKSHPNRRRAWRVFVKSSQSIYELVQATIVVEDMIKTEYLKNEWWYWSSLSAAAKISTLSALSVRIFSLDAAIIYDKPITPSNPIDETKPIISLPDQKSQPVSDSQERSSRVRRSGKKRKEPEGS</sequence>
<reference key="1">
    <citation type="journal article" date="2000" name="Nature">
        <title>Sequence and analysis of chromosome 3 of the plant Arabidopsis thaliana.</title>
        <authorList>
            <person name="Salanoubat M."/>
            <person name="Lemcke K."/>
            <person name="Rieger M."/>
            <person name="Ansorge W."/>
            <person name="Unseld M."/>
            <person name="Fartmann B."/>
            <person name="Valle G."/>
            <person name="Bloecker H."/>
            <person name="Perez-Alonso M."/>
            <person name="Obermaier B."/>
            <person name="Delseny M."/>
            <person name="Boutry M."/>
            <person name="Grivell L.A."/>
            <person name="Mache R."/>
            <person name="Puigdomenech P."/>
            <person name="De Simone V."/>
            <person name="Choisne N."/>
            <person name="Artiguenave F."/>
            <person name="Robert C."/>
            <person name="Brottier P."/>
            <person name="Wincker P."/>
            <person name="Cattolico L."/>
            <person name="Weissenbach J."/>
            <person name="Saurin W."/>
            <person name="Quetier F."/>
            <person name="Schaefer M."/>
            <person name="Mueller-Auer S."/>
            <person name="Gabel C."/>
            <person name="Fuchs M."/>
            <person name="Benes V."/>
            <person name="Wurmbach E."/>
            <person name="Drzonek H."/>
            <person name="Erfle H."/>
            <person name="Jordan N."/>
            <person name="Bangert S."/>
            <person name="Wiedelmann R."/>
            <person name="Kranz H."/>
            <person name="Voss H."/>
            <person name="Holland R."/>
            <person name="Brandt P."/>
            <person name="Nyakatura G."/>
            <person name="Vezzi A."/>
            <person name="D'Angelo M."/>
            <person name="Pallavicini A."/>
            <person name="Toppo S."/>
            <person name="Simionati B."/>
            <person name="Conrad A."/>
            <person name="Hornischer K."/>
            <person name="Kauer G."/>
            <person name="Loehnert T.-H."/>
            <person name="Nordsiek G."/>
            <person name="Reichelt J."/>
            <person name="Scharfe M."/>
            <person name="Schoen O."/>
            <person name="Bargues M."/>
            <person name="Terol J."/>
            <person name="Climent J."/>
            <person name="Navarro P."/>
            <person name="Collado C."/>
            <person name="Perez-Perez A."/>
            <person name="Ottenwaelder B."/>
            <person name="Duchemin D."/>
            <person name="Cooke R."/>
            <person name="Laudie M."/>
            <person name="Berger-Llauro C."/>
            <person name="Purnelle B."/>
            <person name="Masuy D."/>
            <person name="de Haan M."/>
            <person name="Maarse A.C."/>
            <person name="Alcaraz J.-P."/>
            <person name="Cottet A."/>
            <person name="Casacuberta E."/>
            <person name="Monfort A."/>
            <person name="Argiriou A."/>
            <person name="Flores M."/>
            <person name="Liguori R."/>
            <person name="Vitale D."/>
            <person name="Mannhaupt G."/>
            <person name="Haase D."/>
            <person name="Schoof H."/>
            <person name="Rudd S."/>
            <person name="Zaccaria P."/>
            <person name="Mewes H.-W."/>
            <person name="Mayer K.F.X."/>
            <person name="Kaul S."/>
            <person name="Town C.D."/>
            <person name="Koo H.L."/>
            <person name="Tallon L.J."/>
            <person name="Jenkins J."/>
            <person name="Rooney T."/>
            <person name="Rizzo M."/>
            <person name="Walts A."/>
            <person name="Utterback T."/>
            <person name="Fujii C.Y."/>
            <person name="Shea T.P."/>
            <person name="Creasy T.H."/>
            <person name="Haas B."/>
            <person name="Maiti R."/>
            <person name="Wu D."/>
            <person name="Peterson J."/>
            <person name="Van Aken S."/>
            <person name="Pai G."/>
            <person name="Militscher J."/>
            <person name="Sellers P."/>
            <person name="Gill J.E."/>
            <person name="Feldblyum T.V."/>
            <person name="Preuss D."/>
            <person name="Lin X."/>
            <person name="Nierman W.C."/>
            <person name="Salzberg S.L."/>
            <person name="White O."/>
            <person name="Venter J.C."/>
            <person name="Fraser C.M."/>
            <person name="Kaneko T."/>
            <person name="Nakamura Y."/>
            <person name="Sato S."/>
            <person name="Kato T."/>
            <person name="Asamizu E."/>
            <person name="Sasamoto S."/>
            <person name="Kimura T."/>
            <person name="Idesawa K."/>
            <person name="Kawashima K."/>
            <person name="Kishida Y."/>
            <person name="Kiyokawa C."/>
            <person name="Kohara M."/>
            <person name="Matsumoto M."/>
            <person name="Matsuno A."/>
            <person name="Muraki A."/>
            <person name="Nakayama S."/>
            <person name="Nakazaki N."/>
            <person name="Shinpo S."/>
            <person name="Takeuchi C."/>
            <person name="Wada T."/>
            <person name="Watanabe A."/>
            <person name="Yamada M."/>
            <person name="Yasuda M."/>
            <person name="Tabata S."/>
        </authorList>
    </citation>
    <scope>NUCLEOTIDE SEQUENCE [LARGE SCALE GENOMIC DNA]</scope>
    <source>
        <strain>cv. Columbia</strain>
    </source>
</reference>
<reference key="2">
    <citation type="journal article" date="2017" name="Plant J.">
        <title>Araport11: a complete reannotation of the Arabidopsis thaliana reference genome.</title>
        <authorList>
            <person name="Cheng C.Y."/>
            <person name="Krishnakumar V."/>
            <person name="Chan A.P."/>
            <person name="Thibaud-Nissen F."/>
            <person name="Schobel S."/>
            <person name="Town C.D."/>
        </authorList>
    </citation>
    <scope>GENOME REANNOTATION</scope>
    <source>
        <strain>cv. Columbia</strain>
    </source>
</reference>
<reference key="3">
    <citation type="journal article" date="2003" name="Nucleic Acids Res.">
        <title>Ten members of the Arabidopsis gene family encoding methyl-CpG-binding domain proteins are transcriptionally active and at least one, AtMBD11, is crucial for normal development.</title>
        <authorList>
            <person name="Berg A."/>
            <person name="Meza T.J."/>
            <person name="Mahic M."/>
            <person name="Thorstensen T."/>
            <person name="Kristiansen K."/>
            <person name="Aalen R.B."/>
        </authorList>
    </citation>
    <scope>ALTERNATIVE SPLICING</scope>
    <scope>TISSUE SPECIFICITY</scope>
    <scope>GENE FAMILY</scope>
    <scope>NOMENCLATURE</scope>
</reference>
<reference key="4">
    <citation type="journal article" date="2005" name="Plant Physiol.">
        <title>Evolutionary divergence of monocot and dicot methyl-CpG-binding domain proteins.</title>
        <authorList>
            <person name="Springer N.M."/>
            <person name="Kaeppler S.M."/>
        </authorList>
    </citation>
    <scope>GENE FAMILY</scope>
</reference>
<reference key="5">
    <citation type="journal article" date="2006" name="Plant J.">
        <title>AtMBD9: a protein with a methyl-CpG-binding domain regulates flowering time and shoot branching in Arabidopsis.</title>
        <authorList>
            <person name="Peng M."/>
            <person name="Cui Y."/>
            <person name="Bi Y.-M."/>
            <person name="Rothstein S.J."/>
        </authorList>
    </citation>
    <scope>FUNCTION</scope>
    <scope>DISRUPTION PHENOTYPE</scope>
</reference>
<reference key="6">
    <citation type="journal article" date="2007" name="Trends Plant Sci.">
        <title>Methyl-CpG-binding domain proteins in plants: interpreters of DNA methylation.</title>
        <authorList>
            <person name="Zemach A."/>
            <person name="Grafi G."/>
        </authorList>
    </citation>
    <scope>REVIEW</scope>
</reference>
<reference key="7">
    <citation type="journal article" date="2009" name="Plant J.">
        <title>AtMBD9 modulates Arabidopsis development through the dual epigenetic pathways of DNA methylation and histone acetylation.</title>
        <authorList>
            <person name="Yaish M.W.F."/>
            <person name="Peng M."/>
            <person name="Rothstein S.J."/>
        </authorList>
    </citation>
    <scope>FUNCTION</scope>
    <scope>DISRUPTION PHENOTYPE</scope>
    <scope>SUBCELLULAR LOCATION</scope>
    <scope>TISSUE SPECIFICITY</scope>
</reference>
<gene>
    <name type="primary">MBD9</name>
    <name type="ordered locus">At3g01460</name>
    <name type="ORF">F4P13.1</name>
    <name type="ORF">T13O15.10</name>
</gene>
<proteinExistence type="evidence at transcript level"/>